<keyword id="KW-0378">Hydrolase</keyword>
<keyword id="KW-0408">Iron</keyword>
<keyword id="KW-0464">Manganese</keyword>
<keyword id="KW-0479">Metal-binding</keyword>
<keyword id="KW-0507">mRNA processing</keyword>
<keyword id="KW-0539">Nucleus</keyword>
<keyword id="KW-1185">Reference proteome</keyword>
<keyword id="KW-0862">Zinc</keyword>
<sequence length="500" mass="56682">MSSKNPVDEQPCCGSHEGSHQDPAPETLVVEKEVNNGEKKIRIAVVGCSHGEMDAIYETMTLIEQKNGYKFDLLICCGDYQAVRNYGDLPHMSIPPKYRSLQTFYKYYSGEQKAPVLTLFIGGNHEASGYLCELPNGGWVAPNIYYMGFANCIRFANLRIAGLSGIFSQGDFQFSHYERPSFSERDVKSAYHVRNVDMFRLRQLKSDNENKISNPIDIMLSHDWPGGIPDFGDKEWLFRKKDLFEADHNSGKLGNPSGMKLIYDCRPRYYLAAHLHIAFAALVPHKGSGSGRPQPTRFLSLDKPIPGRKFMQALELNVADDAKLELSYDPQWLAILRNTDLLTTGTKEQLILPDMASNRPCVYERKDFRPTAEELKEIEKLGDLTIRTDSFQQTAPPLKEITESSKNVPPSAYYRNPQSAEFCQWLGIRDLNQMLVEKTSEHVGTPYYMMTQDDANAKPNQDDVDFGDEDFVIDRGHTSDEPEAKKSRLDEDKFEAVPSE</sequence>
<protein>
    <recommendedName>
        <fullName>Lariat debranching enzyme</fullName>
        <ecNumber evidence="3">3.1.4.-</ecNumber>
    </recommendedName>
</protein>
<name>DBR1_CAEEL</name>
<gene>
    <name evidence="6" type="primary">dbr-1</name>
    <name evidence="6" type="ORF">C55B7.8</name>
</gene>
<reference key="1">
    <citation type="journal article" date="1997" name="Mol. Cell. Biol.">
        <title>Severe growth defect in a Schizosaccharomyces pombe mutant defective in intron lariat degradation.</title>
        <authorList>
            <person name="Nam K."/>
            <person name="Lee G."/>
            <person name="Trambley J."/>
            <person name="Devine S.E."/>
            <person name="Boeke J.D."/>
        </authorList>
    </citation>
    <scope>NUCLEOTIDE SEQUENCE [GENOMIC DNA]</scope>
</reference>
<reference key="2">
    <citation type="journal article" date="1998" name="Science">
        <title>Genome sequence of the nematode C. elegans: a platform for investigating biology.</title>
        <authorList>
            <consortium name="The C. elegans sequencing consortium"/>
        </authorList>
    </citation>
    <scope>NUCLEOTIDE SEQUENCE [LARGE SCALE GENOMIC DNA]</scope>
    <source>
        <strain>Bristol N2</strain>
    </source>
</reference>
<dbReference type="EC" id="3.1.4.-" evidence="3"/>
<dbReference type="EMBL" id="U63636">
    <property type="protein sequence ID" value="AAC47433.1"/>
    <property type="molecule type" value="Genomic_DNA"/>
</dbReference>
<dbReference type="EMBL" id="BX284601">
    <property type="protein sequence ID" value="CCD68095.1"/>
    <property type="molecule type" value="Genomic_DNA"/>
</dbReference>
<dbReference type="RefSeq" id="NP_491868.2">
    <property type="nucleotide sequence ID" value="NM_059467.5"/>
</dbReference>
<dbReference type="SMR" id="Q966M6"/>
<dbReference type="BioGRID" id="37808">
    <property type="interactions" value="13"/>
</dbReference>
<dbReference type="FunCoup" id="Q966M6">
    <property type="interactions" value="2695"/>
</dbReference>
<dbReference type="STRING" id="6239.C55B7.8.1"/>
<dbReference type="PaxDb" id="6239-C55B7.8"/>
<dbReference type="PeptideAtlas" id="Q966M6"/>
<dbReference type="EnsemblMetazoa" id="C55B7.8.1">
    <property type="protein sequence ID" value="C55B7.8.1"/>
    <property type="gene ID" value="WBGene00000937"/>
</dbReference>
<dbReference type="GeneID" id="172357"/>
<dbReference type="KEGG" id="cel:CELE_C55B7.8"/>
<dbReference type="UCSC" id="C55B7.8">
    <property type="organism name" value="c. elegans"/>
</dbReference>
<dbReference type="AGR" id="WB:WBGene00000937"/>
<dbReference type="CTD" id="172357"/>
<dbReference type="WormBase" id="C55B7.8">
    <property type="protein sequence ID" value="CE30437"/>
    <property type="gene ID" value="WBGene00000937"/>
    <property type="gene designation" value="dbr-1"/>
</dbReference>
<dbReference type="eggNOG" id="KOG2863">
    <property type="taxonomic scope" value="Eukaryota"/>
</dbReference>
<dbReference type="GeneTree" id="ENSGT00510000047481"/>
<dbReference type="HOGENOM" id="CLU_005893_0_0_1"/>
<dbReference type="InParanoid" id="Q966M6"/>
<dbReference type="OMA" id="CARFEVS"/>
<dbReference type="OrthoDB" id="407609at2759"/>
<dbReference type="PhylomeDB" id="Q966M6"/>
<dbReference type="PRO" id="PR:Q966M6"/>
<dbReference type="Proteomes" id="UP000001940">
    <property type="component" value="Chromosome I"/>
</dbReference>
<dbReference type="Bgee" id="WBGene00000937">
    <property type="expression patterns" value="Expressed in germ line (C elegans) and 4 other cell types or tissues"/>
</dbReference>
<dbReference type="GO" id="GO:0005634">
    <property type="term" value="C:nucleus"/>
    <property type="evidence" value="ECO:0000250"/>
    <property type="project" value="UniProtKB"/>
</dbReference>
<dbReference type="GO" id="GO:0046872">
    <property type="term" value="F:metal ion binding"/>
    <property type="evidence" value="ECO:0007669"/>
    <property type="project" value="UniProtKB-KW"/>
</dbReference>
<dbReference type="GO" id="GO:0008419">
    <property type="term" value="F:RNA lariat debranching enzyme activity"/>
    <property type="evidence" value="ECO:0000250"/>
    <property type="project" value="UniProtKB"/>
</dbReference>
<dbReference type="GO" id="GO:0000398">
    <property type="term" value="P:mRNA splicing, via spliceosome"/>
    <property type="evidence" value="ECO:0000318"/>
    <property type="project" value="GO_Central"/>
</dbReference>
<dbReference type="GO" id="GO:0000375">
    <property type="term" value="P:RNA splicing, via transesterification reactions"/>
    <property type="evidence" value="ECO:0000250"/>
    <property type="project" value="UniProtKB"/>
</dbReference>
<dbReference type="CDD" id="cd00844">
    <property type="entry name" value="MPP_Dbr1_N"/>
    <property type="match status" value="1"/>
</dbReference>
<dbReference type="InterPro" id="IPR004843">
    <property type="entry name" value="Calcineurin-like_PHP_ApaH"/>
</dbReference>
<dbReference type="InterPro" id="IPR007708">
    <property type="entry name" value="DBR1_C"/>
</dbReference>
<dbReference type="InterPro" id="IPR041816">
    <property type="entry name" value="Dbr1_N"/>
</dbReference>
<dbReference type="InterPro" id="IPR029052">
    <property type="entry name" value="Metallo-depent_PP-like"/>
</dbReference>
<dbReference type="PANTHER" id="PTHR12849:SF0">
    <property type="entry name" value="LARIAT DEBRANCHING ENZYME"/>
    <property type="match status" value="1"/>
</dbReference>
<dbReference type="PANTHER" id="PTHR12849">
    <property type="entry name" value="RNA LARIAT DEBRANCHING ENZYME"/>
    <property type="match status" value="1"/>
</dbReference>
<dbReference type="Pfam" id="PF05011">
    <property type="entry name" value="DBR1"/>
    <property type="match status" value="1"/>
</dbReference>
<dbReference type="Pfam" id="PF00149">
    <property type="entry name" value="Metallophos"/>
    <property type="match status" value="1"/>
</dbReference>
<dbReference type="SMART" id="SM01124">
    <property type="entry name" value="DBR1"/>
    <property type="match status" value="1"/>
</dbReference>
<dbReference type="SUPFAM" id="SSF56300">
    <property type="entry name" value="Metallo-dependent phosphatases"/>
    <property type="match status" value="1"/>
</dbReference>
<organism>
    <name type="scientific">Caenorhabditis elegans</name>
    <dbReference type="NCBI Taxonomy" id="6239"/>
    <lineage>
        <taxon>Eukaryota</taxon>
        <taxon>Metazoa</taxon>
        <taxon>Ecdysozoa</taxon>
        <taxon>Nematoda</taxon>
        <taxon>Chromadorea</taxon>
        <taxon>Rhabditida</taxon>
        <taxon>Rhabditina</taxon>
        <taxon>Rhabditomorpha</taxon>
        <taxon>Rhabditoidea</taxon>
        <taxon>Rhabditidae</taxon>
        <taxon>Peloderinae</taxon>
        <taxon>Caenorhabditis</taxon>
    </lineage>
</organism>
<feature type="chain" id="PRO_0000250366" description="Lariat debranching enzyme">
    <location>
        <begin position="1"/>
        <end position="500"/>
    </location>
</feature>
<feature type="region of interest" description="Disordered" evidence="4">
    <location>
        <begin position="1"/>
        <end position="25"/>
    </location>
</feature>
<feature type="region of interest" description="Lariat recognition loop" evidence="1">
    <location>
        <begin position="164"/>
        <end position="194"/>
    </location>
</feature>
<feature type="region of interest" description="Disordered" evidence="4">
    <location>
        <begin position="453"/>
        <end position="500"/>
    </location>
</feature>
<feature type="compositionally biased region" description="Acidic residues" evidence="4">
    <location>
        <begin position="462"/>
        <end position="471"/>
    </location>
</feature>
<feature type="compositionally biased region" description="Basic and acidic residues" evidence="4">
    <location>
        <begin position="472"/>
        <end position="500"/>
    </location>
</feature>
<feature type="binding site" evidence="1">
    <location>
        <position position="48"/>
    </location>
    <ligand>
        <name>a divalent metal cation</name>
        <dbReference type="ChEBI" id="CHEBI:60240"/>
        <label>1</label>
    </ligand>
</feature>
<feature type="binding site" evidence="1">
    <location>
        <position position="50"/>
    </location>
    <ligand>
        <name>a divalent metal cation</name>
        <dbReference type="ChEBI" id="CHEBI:60240"/>
        <label>1</label>
    </ligand>
</feature>
<feature type="binding site" evidence="1">
    <location>
        <position position="79"/>
    </location>
    <ligand>
        <name>a divalent metal cation</name>
        <dbReference type="ChEBI" id="CHEBI:60240"/>
        <label>2</label>
    </ligand>
</feature>
<feature type="binding site" evidence="1">
    <location>
        <position position="124"/>
    </location>
    <ligand>
        <name>a divalent metal cation</name>
        <dbReference type="ChEBI" id="CHEBI:60240"/>
        <label>2</label>
    </ligand>
</feature>
<feature type="binding site" evidence="1">
    <location>
        <position position="222"/>
    </location>
    <ligand>
        <name>a divalent metal cation</name>
        <dbReference type="ChEBI" id="CHEBI:60240"/>
        <label>2</label>
    </ligand>
</feature>
<feature type="binding site" evidence="1">
    <location>
        <position position="274"/>
    </location>
    <ligand>
        <name>a divalent metal cation</name>
        <dbReference type="ChEBI" id="CHEBI:60240"/>
        <label>2</label>
    </ligand>
</feature>
<feature type="binding site" evidence="1">
    <location>
        <position position="276"/>
    </location>
    <ligand>
        <name>a divalent metal cation</name>
        <dbReference type="ChEBI" id="CHEBI:60240"/>
        <label>1</label>
    </ligand>
</feature>
<evidence type="ECO:0000250" key="1">
    <source>
        <dbReference type="UniProtKB" id="C4M1P9"/>
    </source>
</evidence>
<evidence type="ECO:0000250" key="2">
    <source>
        <dbReference type="UniProtKB" id="P24309"/>
    </source>
</evidence>
<evidence type="ECO:0000250" key="3">
    <source>
        <dbReference type="UniProtKB" id="Q9UK59"/>
    </source>
</evidence>
<evidence type="ECO:0000256" key="4">
    <source>
        <dbReference type="SAM" id="MobiDB-lite"/>
    </source>
</evidence>
<evidence type="ECO:0000305" key="5"/>
<evidence type="ECO:0000312" key="6">
    <source>
        <dbReference type="WormBase" id="C55B7.8"/>
    </source>
</evidence>
<accession>Q966M6</accession>
<accession>P90972</accession>
<comment type="function">
    <text evidence="3">Cleaves the 2'-5' phosphodiester linkage at the branch point of lariat intron pre-mRNAs after splicing and converts them into linear molecules that are subsequently degraded. It thereby facilitates ribonucleotide turnover.</text>
</comment>
<comment type="cofactor">
    <cofactor evidence="2">
        <name>Fe(2+)</name>
        <dbReference type="ChEBI" id="CHEBI:29033"/>
    </cofactor>
    <cofactor evidence="2">
        <name>Zn(2+)</name>
        <dbReference type="ChEBI" id="CHEBI:29105"/>
    </cofactor>
    <cofactor evidence="3">
        <name>Mn(2+)</name>
        <dbReference type="ChEBI" id="CHEBI:29035"/>
    </cofactor>
    <text evidence="2">Binds 2 divalent metal cations per subunit.</text>
</comment>
<comment type="activity regulation">
    <text evidence="2">Active in presence of diverse metals including Fe(2+), Zn(2+), Mn(2+) (By similarity). Binds two metal cations in two adjacent alpha and beta metal-binding pockets (By similarity).</text>
</comment>
<comment type="subcellular location">
    <subcellularLocation>
        <location evidence="5">Nucleus</location>
    </subcellularLocation>
</comment>
<comment type="similarity">
    <text evidence="5">Belongs to the lariat debranching enzyme family.</text>
</comment>
<proteinExistence type="inferred from homology"/>